<evidence type="ECO:0000255" key="1">
    <source>
        <dbReference type="HAMAP-Rule" id="MF_00235"/>
    </source>
</evidence>
<comment type="function">
    <text evidence="1">Catalyzes the reversible transfer of the terminal phosphate group between ATP and AMP. Plays an important role in cellular energy homeostasis and in adenine nucleotide metabolism.</text>
</comment>
<comment type="catalytic activity">
    <reaction evidence="1">
        <text>AMP + ATP = 2 ADP</text>
        <dbReference type="Rhea" id="RHEA:12973"/>
        <dbReference type="ChEBI" id="CHEBI:30616"/>
        <dbReference type="ChEBI" id="CHEBI:456215"/>
        <dbReference type="ChEBI" id="CHEBI:456216"/>
        <dbReference type="EC" id="2.7.4.3"/>
    </reaction>
</comment>
<comment type="pathway">
    <text evidence="1">Purine metabolism; AMP biosynthesis via salvage pathway; AMP from ADP: step 1/1.</text>
</comment>
<comment type="subunit">
    <text evidence="1">Monomer.</text>
</comment>
<comment type="subcellular location">
    <subcellularLocation>
        <location evidence="1">Cytoplasm</location>
    </subcellularLocation>
</comment>
<comment type="domain">
    <text evidence="1">Consists of three domains, a large central CORE domain and two small peripheral domains, NMPbind and LID, which undergo movements during catalysis. The LID domain closes over the site of phosphoryl transfer upon ATP binding. Assembling and dissambling the active center during each catalytic cycle provides an effective means to prevent ATP hydrolysis.</text>
</comment>
<comment type="similarity">
    <text evidence="1">Belongs to the adenylate kinase family.</text>
</comment>
<protein>
    <recommendedName>
        <fullName evidence="1">Adenylate kinase</fullName>
        <shortName evidence="1">AK</shortName>
        <ecNumber evidence="1">2.7.4.3</ecNumber>
    </recommendedName>
    <alternativeName>
        <fullName evidence="1">ATP-AMP transphosphorylase</fullName>
    </alternativeName>
    <alternativeName>
        <fullName evidence="1">ATP:AMP phosphotransferase</fullName>
    </alternativeName>
    <alternativeName>
        <fullName evidence="1">Adenylate monophosphate kinase</fullName>
    </alternativeName>
</protein>
<proteinExistence type="inferred from homology"/>
<gene>
    <name evidence="1" type="primary">adk</name>
</gene>
<sequence length="205" mass="22440">MTRMLLMGPPGSGKGTQATRIADKLGIVPISTGDIFRHNVKSMTPLGVEAKRYIDNGDFVPDEVTNRMVADRIAQADAEHGFLLDGYPRTKGQVEALDAMLAEAGQSLSAVVELEVPDEELVERLLKRAEIEGRADDTQEVIEHRLDLYHRETESVIQEYVERGIVARVDGTGQIDDVTERLLQAVYSVRSATGSLPVIQPGAES</sequence>
<feature type="chain" id="PRO_0000158793" description="Adenylate kinase">
    <location>
        <begin position="1"/>
        <end position="205"/>
    </location>
</feature>
<feature type="region of interest" description="NMP" evidence="1">
    <location>
        <begin position="31"/>
        <end position="60"/>
    </location>
</feature>
<feature type="region of interest" description="LID" evidence="1">
    <location>
        <begin position="127"/>
        <end position="137"/>
    </location>
</feature>
<feature type="binding site" evidence="1">
    <location>
        <begin position="11"/>
        <end position="16"/>
    </location>
    <ligand>
        <name>ATP</name>
        <dbReference type="ChEBI" id="CHEBI:30616"/>
    </ligand>
</feature>
<feature type="binding site" evidence="1">
    <location>
        <position position="32"/>
    </location>
    <ligand>
        <name>AMP</name>
        <dbReference type="ChEBI" id="CHEBI:456215"/>
    </ligand>
</feature>
<feature type="binding site" evidence="1">
    <location>
        <position position="37"/>
    </location>
    <ligand>
        <name>AMP</name>
        <dbReference type="ChEBI" id="CHEBI:456215"/>
    </ligand>
</feature>
<feature type="binding site" evidence="1">
    <location>
        <begin position="58"/>
        <end position="60"/>
    </location>
    <ligand>
        <name>AMP</name>
        <dbReference type="ChEBI" id="CHEBI:456215"/>
    </ligand>
</feature>
<feature type="binding site" evidence="1">
    <location>
        <begin position="86"/>
        <end position="89"/>
    </location>
    <ligand>
        <name>AMP</name>
        <dbReference type="ChEBI" id="CHEBI:456215"/>
    </ligand>
</feature>
<feature type="binding site" evidence="1">
    <location>
        <position position="93"/>
    </location>
    <ligand>
        <name>AMP</name>
        <dbReference type="ChEBI" id="CHEBI:456215"/>
    </ligand>
</feature>
<feature type="binding site" evidence="1">
    <location>
        <position position="128"/>
    </location>
    <ligand>
        <name>ATP</name>
        <dbReference type="ChEBI" id="CHEBI:30616"/>
    </ligand>
</feature>
<feature type="binding site" evidence="1">
    <location>
        <position position="134"/>
    </location>
    <ligand>
        <name>AMP</name>
        <dbReference type="ChEBI" id="CHEBI:456215"/>
    </ligand>
</feature>
<feature type="binding site" evidence="1">
    <location>
        <position position="145"/>
    </location>
    <ligand>
        <name>AMP</name>
        <dbReference type="ChEBI" id="CHEBI:456215"/>
    </ligand>
</feature>
<feature type="binding site" evidence="1">
    <location>
        <position position="173"/>
    </location>
    <ligand>
        <name>ATP</name>
        <dbReference type="ChEBI" id="CHEBI:30616"/>
    </ligand>
</feature>
<organism>
    <name type="scientific">Micrococcus luteus</name>
    <name type="common">Micrococcus lysodeikticus</name>
    <dbReference type="NCBI Taxonomy" id="1270"/>
    <lineage>
        <taxon>Bacteria</taxon>
        <taxon>Bacillati</taxon>
        <taxon>Actinomycetota</taxon>
        <taxon>Actinomycetes</taxon>
        <taxon>Micrococcales</taxon>
        <taxon>Micrococcaceae</taxon>
        <taxon>Micrococcus</taxon>
    </lineage>
</organism>
<name>KAD_MICLU</name>
<reference key="1">
    <citation type="journal article" date="1989" name="J. Mol. Evol.">
        <title>Spectinomycin operon of Micrococcus luteus: evolutionary implications of organization and novel codon usage.</title>
        <authorList>
            <person name="Ohama T."/>
            <person name="Muto A."/>
            <person name="Osawa S."/>
        </authorList>
    </citation>
    <scope>NUCLEOTIDE SEQUENCE [GENOMIC DNA]</scope>
</reference>
<keyword id="KW-0067">ATP-binding</keyword>
<keyword id="KW-0963">Cytoplasm</keyword>
<keyword id="KW-0418">Kinase</keyword>
<keyword id="KW-0545">Nucleotide biosynthesis</keyword>
<keyword id="KW-0547">Nucleotide-binding</keyword>
<keyword id="KW-0808">Transferase</keyword>
<dbReference type="EC" id="2.7.4.3" evidence="1"/>
<dbReference type="EMBL" id="X17524">
    <property type="protein sequence ID" value="CAA35568.1"/>
    <property type="molecule type" value="Genomic_DNA"/>
</dbReference>
<dbReference type="PIR" id="S17070">
    <property type="entry name" value="S17070"/>
</dbReference>
<dbReference type="RefSeq" id="WP_010080395.1">
    <property type="nucleotide sequence ID" value="NZ_QVMY01000019.1"/>
</dbReference>
<dbReference type="SMR" id="P33107"/>
<dbReference type="STRING" id="1232675.GCA_000309825_02137"/>
<dbReference type="PATRIC" id="fig|1270.31.peg.1692"/>
<dbReference type="OMA" id="VYHEQTA"/>
<dbReference type="UniPathway" id="UPA00588">
    <property type="reaction ID" value="UER00649"/>
</dbReference>
<dbReference type="GO" id="GO:0005737">
    <property type="term" value="C:cytoplasm"/>
    <property type="evidence" value="ECO:0007669"/>
    <property type="project" value="UniProtKB-SubCell"/>
</dbReference>
<dbReference type="GO" id="GO:0004017">
    <property type="term" value="F:adenylate kinase activity"/>
    <property type="evidence" value="ECO:0007669"/>
    <property type="project" value="UniProtKB-UniRule"/>
</dbReference>
<dbReference type="GO" id="GO:0005524">
    <property type="term" value="F:ATP binding"/>
    <property type="evidence" value="ECO:0007669"/>
    <property type="project" value="UniProtKB-UniRule"/>
</dbReference>
<dbReference type="GO" id="GO:0044209">
    <property type="term" value="P:AMP salvage"/>
    <property type="evidence" value="ECO:0007669"/>
    <property type="project" value="UniProtKB-UniRule"/>
</dbReference>
<dbReference type="CDD" id="cd01428">
    <property type="entry name" value="ADK"/>
    <property type="match status" value="1"/>
</dbReference>
<dbReference type="Gene3D" id="3.40.50.300">
    <property type="entry name" value="P-loop containing nucleotide triphosphate hydrolases"/>
    <property type="match status" value="1"/>
</dbReference>
<dbReference type="HAMAP" id="MF_00235">
    <property type="entry name" value="Adenylate_kinase_Adk"/>
    <property type="match status" value="1"/>
</dbReference>
<dbReference type="InterPro" id="IPR006259">
    <property type="entry name" value="Adenyl_kin_sub"/>
</dbReference>
<dbReference type="InterPro" id="IPR000850">
    <property type="entry name" value="Adenylat/UMP-CMP_kin"/>
</dbReference>
<dbReference type="InterPro" id="IPR033690">
    <property type="entry name" value="Adenylat_kinase_CS"/>
</dbReference>
<dbReference type="InterPro" id="IPR027417">
    <property type="entry name" value="P-loop_NTPase"/>
</dbReference>
<dbReference type="NCBIfam" id="TIGR01351">
    <property type="entry name" value="adk"/>
    <property type="match status" value="1"/>
</dbReference>
<dbReference type="NCBIfam" id="NF001381">
    <property type="entry name" value="PRK00279.1-3"/>
    <property type="match status" value="1"/>
</dbReference>
<dbReference type="NCBIfam" id="NF011100">
    <property type="entry name" value="PRK14527.1"/>
    <property type="match status" value="1"/>
</dbReference>
<dbReference type="NCBIfam" id="NF011101">
    <property type="entry name" value="PRK14528.1"/>
    <property type="match status" value="1"/>
</dbReference>
<dbReference type="NCBIfam" id="NF011104">
    <property type="entry name" value="PRK14531.1"/>
    <property type="match status" value="1"/>
</dbReference>
<dbReference type="NCBIfam" id="NF011105">
    <property type="entry name" value="PRK14532.1"/>
    <property type="match status" value="1"/>
</dbReference>
<dbReference type="PANTHER" id="PTHR23359">
    <property type="entry name" value="NUCLEOTIDE KINASE"/>
    <property type="match status" value="1"/>
</dbReference>
<dbReference type="Pfam" id="PF00406">
    <property type="entry name" value="ADK"/>
    <property type="match status" value="1"/>
</dbReference>
<dbReference type="PRINTS" id="PR00094">
    <property type="entry name" value="ADENYLTKNASE"/>
</dbReference>
<dbReference type="SUPFAM" id="SSF52540">
    <property type="entry name" value="P-loop containing nucleoside triphosphate hydrolases"/>
    <property type="match status" value="1"/>
</dbReference>
<dbReference type="PROSITE" id="PS00113">
    <property type="entry name" value="ADENYLATE_KINASE"/>
    <property type="match status" value="1"/>
</dbReference>
<accession>P33107</accession>